<dbReference type="EMBL" id="AL832915">
    <property type="protein sequence ID" value="CAH10618.1"/>
    <property type="molecule type" value="mRNA"/>
</dbReference>
<dbReference type="EMBL" id="CH471191">
    <property type="protein sequence ID" value="EAW53619.1"/>
    <property type="molecule type" value="Genomic_DNA"/>
</dbReference>
<dbReference type="CCDS" id="CCDS87189.1"/>
<dbReference type="RefSeq" id="NP_001342172.1">
    <property type="nucleotide sequence ID" value="NM_001355243.2"/>
</dbReference>
<dbReference type="SMR" id="Q69YL0"/>
<dbReference type="FunCoup" id="Q69YL0">
    <property type="interactions" value="135"/>
</dbReference>
<dbReference type="IntAct" id="Q69YL0">
    <property type="interactions" value="13"/>
</dbReference>
<dbReference type="STRING" id="9606.ENSP00000488305"/>
<dbReference type="BioMuta" id="NCBP2-AS2"/>
<dbReference type="jPOST" id="Q69YL0"/>
<dbReference type="MassIVE" id="Q69YL0"/>
<dbReference type="PeptideAtlas" id="Q69YL0"/>
<dbReference type="Pumba" id="Q69YL0"/>
<dbReference type="Ensembl" id="ENST00000602845.2">
    <property type="protein sequence ID" value="ENSP00000488305.1"/>
    <property type="gene ID" value="ENSG00000270170.2"/>
</dbReference>
<dbReference type="GeneID" id="152217"/>
<dbReference type="MANE-Select" id="ENST00000602845.2">
    <property type="protein sequence ID" value="ENSP00000488305.1"/>
    <property type="RefSeq nucleotide sequence ID" value="NM_001355243.2"/>
    <property type="RefSeq protein sequence ID" value="NP_001342172.1"/>
</dbReference>
<dbReference type="AGR" id="HGNC:25121"/>
<dbReference type="GeneCards" id="NCBP2AS2"/>
<dbReference type="HGNC" id="HGNC:25121">
    <property type="gene designation" value="NCBP2AS2"/>
</dbReference>
<dbReference type="HPA" id="ENSG00000270170">
    <property type="expression patterns" value="Low tissue specificity"/>
</dbReference>
<dbReference type="neXtProt" id="NX_Q69YL0"/>
<dbReference type="VEuPathDB" id="HostDB:ENSG00000270170"/>
<dbReference type="GeneTree" id="ENSGT00390000001143"/>
<dbReference type="HOGENOM" id="CLU_181654_0_0_1"/>
<dbReference type="InParanoid" id="Q69YL0"/>
<dbReference type="OMA" id="YNITHMA"/>
<dbReference type="OrthoDB" id="5950777at2759"/>
<dbReference type="PAN-GO" id="Q69YL0">
    <property type="GO annotations" value="0 GO annotations based on evolutionary models"/>
</dbReference>
<dbReference type="PhylomeDB" id="Q69YL0"/>
<dbReference type="PathwayCommons" id="Q69YL0"/>
<dbReference type="SignaLink" id="Q69YL0"/>
<dbReference type="Pharos" id="Q69YL0">
    <property type="development level" value="Tdark"/>
</dbReference>
<dbReference type="PRO" id="PR:Q69YL0"/>
<dbReference type="Proteomes" id="UP000005640">
    <property type="component" value="Chromosome 3"/>
</dbReference>
<dbReference type="RNAct" id="Q69YL0">
    <property type="molecule type" value="protein"/>
</dbReference>
<dbReference type="Bgee" id="ENSG00000270170">
    <property type="expression patterns" value="Expressed in mucosa of transverse colon and 95 other cell types or tissues"/>
</dbReference>
<dbReference type="GO" id="GO:0005739">
    <property type="term" value="C:mitochondrion"/>
    <property type="evidence" value="ECO:0006056"/>
    <property type="project" value="FlyBase"/>
</dbReference>
<dbReference type="InterPro" id="IPR042407">
    <property type="entry name" value="NCBP2-AS2"/>
</dbReference>
<dbReference type="PANTHER" id="PTHR41161">
    <property type="entry name" value="PROTEIN NCBP2AS2"/>
    <property type="match status" value="1"/>
</dbReference>
<dbReference type="PANTHER" id="PTHR41161:SF1">
    <property type="entry name" value="PROTEIN NCBP2AS2"/>
    <property type="match status" value="1"/>
</dbReference>
<protein>
    <recommendedName>
        <fullName>Protein NCBP2AS2</fullName>
    </recommendedName>
    <alternativeName>
        <fullName evidence="3">Hypoxia-induced angiogenesis regulator</fullName>
    </alternativeName>
    <alternativeName>
        <fullName>NCBP2 antisense gene protein 2</fullName>
    </alternativeName>
</protein>
<organism>
    <name type="scientific">Homo sapiens</name>
    <name type="common">Human</name>
    <dbReference type="NCBI Taxonomy" id="9606"/>
    <lineage>
        <taxon>Eukaryota</taxon>
        <taxon>Metazoa</taxon>
        <taxon>Chordata</taxon>
        <taxon>Craniata</taxon>
        <taxon>Vertebrata</taxon>
        <taxon>Euteleostomi</taxon>
        <taxon>Mammalia</taxon>
        <taxon>Eutheria</taxon>
        <taxon>Euarchontoglires</taxon>
        <taxon>Primates</taxon>
        <taxon>Haplorrhini</taxon>
        <taxon>Catarrhini</taxon>
        <taxon>Hominidae</taxon>
        <taxon>Homo</taxon>
    </lineage>
</organism>
<proteinExistence type="evidence at protein level"/>
<keyword id="KW-1267">Proteomics identification</keyword>
<keyword id="KW-1185">Reference proteome</keyword>
<comment type="interaction">
    <interactant intactId="EBI-10986258">
        <id>Q69YL0</id>
    </interactant>
    <interactant intactId="EBI-745535">
        <id>Q8NI60</id>
        <label>COQ8A</label>
    </interactant>
    <organismsDiffer>false</organismsDiffer>
    <experiments>3</experiments>
</comment>
<comment type="interaction">
    <interactant intactId="EBI-10986258">
        <id>Q69YL0</id>
    </interactant>
    <interactant intactId="EBI-2834035">
        <id>Q5RI15</id>
        <label>COX20</label>
    </interactant>
    <organismsDiffer>false</organismsDiffer>
    <experiments>3</experiments>
</comment>
<comment type="interaction">
    <interactant intactId="EBI-10986258">
        <id>Q69YL0</id>
    </interactant>
    <interactant intactId="EBI-21591415">
        <id>P13473-2</id>
        <label>LAMP2</label>
    </interactant>
    <organismsDiffer>false</organismsDiffer>
    <experiments>3</experiments>
</comment>
<comment type="interaction">
    <interactant intactId="EBI-10986258">
        <id>Q69YL0</id>
    </interactant>
    <interactant intactId="EBI-17589229">
        <id>Q6NTF9-3</id>
        <label>RHBDD2</label>
    </interactant>
    <organismsDiffer>false</organismsDiffer>
    <experiments>3</experiments>
</comment>
<comment type="interaction">
    <interactant intactId="EBI-10986258">
        <id>Q69YL0</id>
    </interactant>
    <interactant intactId="EBI-2623095">
        <id>Q9Y371</id>
        <label>SH3GLB1</label>
    </interactant>
    <organismsDiffer>false</organismsDiffer>
    <experiments>3</experiments>
</comment>
<comment type="miscellaneous">
    <text evidence="2">Induced by hypoxia in cancer-associated fibroblasts and promotes tumor angiogenesis by causing increased secretion of VEGFA which leads to endothelial sprouting.</text>
</comment>
<feature type="chain" id="PRO_0000370383" description="Protein NCBP2AS2">
    <location>
        <begin position="1"/>
        <end position="99"/>
    </location>
</feature>
<feature type="region of interest" description="Disordered" evidence="1">
    <location>
        <begin position="76"/>
        <end position="99"/>
    </location>
</feature>
<sequence length="99" mass="10891">MVLRRLLAALLHSPQLVERLSESRPIRRAAQLTAFALLQAQLRGQDAARRLQDLAAGPVGSLCRRAERFRDAFTQELRRGLRGRSGPPPGSQRGPGANI</sequence>
<name>NCAS2_HUMAN</name>
<evidence type="ECO:0000256" key="1">
    <source>
        <dbReference type="SAM" id="MobiDB-lite"/>
    </source>
</evidence>
<evidence type="ECO:0000269" key="2">
    <source>
    </source>
</evidence>
<evidence type="ECO:0000303" key="3">
    <source>
    </source>
</evidence>
<evidence type="ECO:0000312" key="4">
    <source>
        <dbReference type="HGNC" id="HGNC:25121"/>
    </source>
</evidence>
<reference key="1">
    <citation type="journal article" date="2007" name="BMC Genomics">
        <title>The full-ORF clone resource of the German cDNA consortium.</title>
        <authorList>
            <person name="Bechtel S."/>
            <person name="Rosenfelder H."/>
            <person name="Duda A."/>
            <person name="Schmidt C.P."/>
            <person name="Ernst U."/>
            <person name="Wellenreuther R."/>
            <person name="Mehrle A."/>
            <person name="Schuster C."/>
            <person name="Bahr A."/>
            <person name="Bloecker H."/>
            <person name="Heubner D."/>
            <person name="Hoerlein A."/>
            <person name="Michel G."/>
            <person name="Wedler H."/>
            <person name="Koehrer K."/>
            <person name="Ottenwaelder B."/>
            <person name="Poustka A."/>
            <person name="Wiemann S."/>
            <person name="Schupp I."/>
        </authorList>
    </citation>
    <scope>NUCLEOTIDE SEQUENCE [LARGE SCALE MRNA]</scope>
    <source>
        <tissue>Melanoma</tissue>
    </source>
</reference>
<reference key="2">
    <citation type="submission" date="2005-09" db="EMBL/GenBank/DDBJ databases">
        <authorList>
            <person name="Mural R.J."/>
            <person name="Istrail S."/>
            <person name="Sutton G.G."/>
            <person name="Florea L."/>
            <person name="Halpern A.L."/>
            <person name="Mobarry C.M."/>
            <person name="Lippert R."/>
            <person name="Walenz B."/>
            <person name="Shatkay H."/>
            <person name="Dew I."/>
            <person name="Miller J.R."/>
            <person name="Flanigan M.J."/>
            <person name="Edwards N.J."/>
            <person name="Bolanos R."/>
            <person name="Fasulo D."/>
            <person name="Halldorsson B.V."/>
            <person name="Hannenhalli S."/>
            <person name="Turner R."/>
            <person name="Yooseph S."/>
            <person name="Lu F."/>
            <person name="Nusskern D.R."/>
            <person name="Shue B.C."/>
            <person name="Zheng X.H."/>
            <person name="Zhong F."/>
            <person name="Delcher A.L."/>
            <person name="Huson D.H."/>
            <person name="Kravitz S.A."/>
            <person name="Mouchard L."/>
            <person name="Reinert K."/>
            <person name="Remington K.A."/>
            <person name="Clark A.G."/>
            <person name="Waterman M.S."/>
            <person name="Eichler E.E."/>
            <person name="Adams M.D."/>
            <person name="Hunkapiller M.W."/>
            <person name="Myers E.W."/>
            <person name="Venter J.C."/>
        </authorList>
    </citation>
    <scope>NUCLEOTIDE SEQUENCE [LARGE SCALE GENOMIC DNA]</scope>
</reference>
<reference key="3">
    <citation type="journal article" date="2015" name="Proteomics">
        <title>N-terminome analysis of the human mitochondrial proteome.</title>
        <authorList>
            <person name="Vaca Jacome A.S."/>
            <person name="Rabilloud T."/>
            <person name="Schaeffer-Reiss C."/>
            <person name="Rompais M."/>
            <person name="Ayoub D."/>
            <person name="Lane L."/>
            <person name="Bairoch A."/>
            <person name="Van Dorsselaer A."/>
            <person name="Carapito C."/>
        </authorList>
    </citation>
    <scope>IDENTIFICATION BY MASS SPECTROMETRY [LARGE SCALE ANALYSIS]</scope>
</reference>
<reference key="4">
    <citation type="journal article" date="2019" name="Sci. Signal.">
        <title>Hypoxic cancer-associated fibroblasts increase NCBP2-AS2/HIAR to promote endothelial sprouting through enhanced VEGF signaling.</title>
        <authorList>
            <person name="Kugeratski F.G."/>
            <person name="Atkinson S.J."/>
            <person name="Neilson L.J."/>
            <person name="Lilla S."/>
            <person name="Knight J.R.P."/>
            <person name="Serneels J."/>
            <person name="Juin A."/>
            <person name="Ismail S."/>
            <person name="Bryant D.M."/>
            <person name="Markert E.K."/>
            <person name="Machesky L.M."/>
            <person name="Mazzone M."/>
            <person name="Sansom O.J."/>
            <person name="Zanivan S."/>
        </authorList>
    </citation>
    <scope>IDENTIFICATION BY MASS SPECTROMETRY</scope>
    <scope>ROLE IN TUMOR ANGIOGENESIS</scope>
</reference>
<accession>Q69YL0</accession>
<gene>
    <name evidence="4" type="primary">NCBP2AS2</name>
    <name evidence="3" type="synonym">HIAR</name>
</gene>